<gene>
    <name evidence="1" type="primary">hslU</name>
    <name type="ordered locus">lhv_1078</name>
</gene>
<accession>A8YV51</accession>
<comment type="function">
    <text evidence="1">ATPase subunit of a proteasome-like degradation complex; this subunit has chaperone activity. The binding of ATP and its subsequent hydrolysis by HslU are essential for unfolding of protein substrates subsequently hydrolyzed by HslV. HslU recognizes the N-terminal part of its protein substrates and unfolds these before they are guided to HslV for hydrolysis.</text>
</comment>
<comment type="subunit">
    <text evidence="1">A double ring-shaped homohexamer of HslV is capped on each side by a ring-shaped HslU homohexamer. The assembly of the HslU/HslV complex is dependent on binding of ATP.</text>
</comment>
<comment type="subcellular location">
    <subcellularLocation>
        <location evidence="1">Cytoplasm</location>
    </subcellularLocation>
</comment>
<comment type="similarity">
    <text evidence="1">Belongs to the ClpX chaperone family. HslU subfamily.</text>
</comment>
<feature type="chain" id="PRO_1000071853" description="ATP-dependent protease ATPase subunit HslU">
    <location>
        <begin position="1"/>
        <end position="467"/>
    </location>
</feature>
<feature type="binding site" evidence="1">
    <location>
        <position position="18"/>
    </location>
    <ligand>
        <name>ATP</name>
        <dbReference type="ChEBI" id="CHEBI:30616"/>
    </ligand>
</feature>
<feature type="binding site" evidence="1">
    <location>
        <begin position="60"/>
        <end position="65"/>
    </location>
    <ligand>
        <name>ATP</name>
        <dbReference type="ChEBI" id="CHEBI:30616"/>
    </ligand>
</feature>
<feature type="binding site" evidence="1">
    <location>
        <position position="280"/>
    </location>
    <ligand>
        <name>ATP</name>
        <dbReference type="ChEBI" id="CHEBI:30616"/>
    </ligand>
</feature>
<feature type="binding site" evidence="1">
    <location>
        <position position="345"/>
    </location>
    <ligand>
        <name>ATP</name>
        <dbReference type="ChEBI" id="CHEBI:30616"/>
    </ligand>
</feature>
<feature type="binding site" evidence="1">
    <location>
        <position position="417"/>
    </location>
    <ligand>
        <name>ATP</name>
        <dbReference type="ChEBI" id="CHEBI:30616"/>
    </ligand>
</feature>
<evidence type="ECO:0000255" key="1">
    <source>
        <dbReference type="HAMAP-Rule" id="MF_00249"/>
    </source>
</evidence>
<name>HSLU_LACH4</name>
<reference key="1">
    <citation type="journal article" date="2008" name="J. Bacteriol.">
        <title>Genome sequence of Lactobacillus helveticus: an organism distinguished by selective gene loss and IS element expansion.</title>
        <authorList>
            <person name="Callanan M."/>
            <person name="Kaleta P."/>
            <person name="O'Callaghan J."/>
            <person name="O'Sullivan O."/>
            <person name="Jordan K."/>
            <person name="McAuliffe O."/>
            <person name="Sangrador-Vegas A."/>
            <person name="Slattery L."/>
            <person name="Fitzgerald G.F."/>
            <person name="Beresford T."/>
            <person name="Ross R.P."/>
        </authorList>
    </citation>
    <scope>NUCLEOTIDE SEQUENCE [LARGE SCALE GENOMIC DNA]</scope>
    <source>
        <strain>DPC 4571</strain>
    </source>
</reference>
<proteinExistence type="inferred from homology"/>
<organism>
    <name type="scientific">Lactobacillus helveticus (strain DPC 4571)</name>
    <dbReference type="NCBI Taxonomy" id="405566"/>
    <lineage>
        <taxon>Bacteria</taxon>
        <taxon>Bacillati</taxon>
        <taxon>Bacillota</taxon>
        <taxon>Bacilli</taxon>
        <taxon>Lactobacillales</taxon>
        <taxon>Lactobacillaceae</taxon>
        <taxon>Lactobacillus</taxon>
    </lineage>
</organism>
<sequence length="467" mass="52824">MAIKTPKEIVKILNEYIIGQDEAKKSVAIALYNRYRRMQLSKQMQHEITPKNLLMAGPTGVGKTEIARRLASIVEAPFVKVEATKFTEVGYVGRDVESMVRDLVGEAVRMEEKDQFARVKPQATKEANKQLVRLLAPGVKREKRENQMQQMQDMMSMLMGGANPNNQNNDQEEVTDEVRNERMDVAEKLNKGLLEDREVTIEVEQAPKANPMSDMMGQMGMDMGSMLNDIMPKKKVKRTLSVRDAREVLIQEESRKMVDYDTIYQRAIERSQNNGIIFIDEIDKIIAGNKRNSGEVSREGVQRDVLPIVEGSTVNTKYGPVSTDHILFIAAGAFAESKPSDLIPELQGRFPIRVELNALTKDDFVKILKDPQNSLLKQYIALMKADGIKLIFTQEAVDKIAQIAFDVNQGTDNIGARRLSTILEKLLEDVLYEGPDMEMGEITITEAYVEEKLHDIIMNKDLTKFIL</sequence>
<keyword id="KW-0067">ATP-binding</keyword>
<keyword id="KW-0143">Chaperone</keyword>
<keyword id="KW-0963">Cytoplasm</keyword>
<keyword id="KW-0547">Nucleotide-binding</keyword>
<dbReference type="EMBL" id="CP000517">
    <property type="protein sequence ID" value="ABX27139.1"/>
    <property type="molecule type" value="Genomic_DNA"/>
</dbReference>
<dbReference type="RefSeq" id="WP_012211830.1">
    <property type="nucleotide sequence ID" value="NC_010080.1"/>
</dbReference>
<dbReference type="SMR" id="A8YV51"/>
<dbReference type="KEGG" id="lhe:lhv_1078"/>
<dbReference type="eggNOG" id="COG1220">
    <property type="taxonomic scope" value="Bacteria"/>
</dbReference>
<dbReference type="HOGENOM" id="CLU_033123_0_0_9"/>
<dbReference type="Proteomes" id="UP000000790">
    <property type="component" value="Chromosome"/>
</dbReference>
<dbReference type="GO" id="GO:0009376">
    <property type="term" value="C:HslUV protease complex"/>
    <property type="evidence" value="ECO:0007669"/>
    <property type="project" value="UniProtKB-UniRule"/>
</dbReference>
<dbReference type="GO" id="GO:0005524">
    <property type="term" value="F:ATP binding"/>
    <property type="evidence" value="ECO:0007669"/>
    <property type="project" value="UniProtKB-UniRule"/>
</dbReference>
<dbReference type="GO" id="GO:0016887">
    <property type="term" value="F:ATP hydrolysis activity"/>
    <property type="evidence" value="ECO:0007669"/>
    <property type="project" value="InterPro"/>
</dbReference>
<dbReference type="GO" id="GO:0008233">
    <property type="term" value="F:peptidase activity"/>
    <property type="evidence" value="ECO:0007669"/>
    <property type="project" value="InterPro"/>
</dbReference>
<dbReference type="GO" id="GO:0036402">
    <property type="term" value="F:proteasome-activating activity"/>
    <property type="evidence" value="ECO:0007669"/>
    <property type="project" value="UniProtKB-UniRule"/>
</dbReference>
<dbReference type="GO" id="GO:0043335">
    <property type="term" value="P:protein unfolding"/>
    <property type="evidence" value="ECO:0007669"/>
    <property type="project" value="UniProtKB-UniRule"/>
</dbReference>
<dbReference type="GO" id="GO:0051603">
    <property type="term" value="P:proteolysis involved in protein catabolic process"/>
    <property type="evidence" value="ECO:0007669"/>
    <property type="project" value="TreeGrafter"/>
</dbReference>
<dbReference type="FunFam" id="3.40.50.300:FF:000213">
    <property type="entry name" value="ATP-dependent protease ATPase subunit HslU"/>
    <property type="match status" value="1"/>
</dbReference>
<dbReference type="Gene3D" id="1.10.8.60">
    <property type="match status" value="1"/>
</dbReference>
<dbReference type="Gene3D" id="3.40.50.300">
    <property type="entry name" value="P-loop containing nucleotide triphosphate hydrolases"/>
    <property type="match status" value="2"/>
</dbReference>
<dbReference type="HAMAP" id="MF_00249">
    <property type="entry name" value="HslU"/>
    <property type="match status" value="1"/>
</dbReference>
<dbReference type="InterPro" id="IPR003593">
    <property type="entry name" value="AAA+_ATPase"/>
</dbReference>
<dbReference type="InterPro" id="IPR050052">
    <property type="entry name" value="ATP-dep_Clp_protease_ClpX"/>
</dbReference>
<dbReference type="InterPro" id="IPR003959">
    <property type="entry name" value="ATPase_AAA_core"/>
</dbReference>
<dbReference type="InterPro" id="IPR019489">
    <property type="entry name" value="Clp_ATPase_C"/>
</dbReference>
<dbReference type="InterPro" id="IPR004491">
    <property type="entry name" value="HslU"/>
</dbReference>
<dbReference type="InterPro" id="IPR027417">
    <property type="entry name" value="P-loop_NTPase"/>
</dbReference>
<dbReference type="NCBIfam" id="TIGR00390">
    <property type="entry name" value="hslU"/>
    <property type="match status" value="1"/>
</dbReference>
<dbReference type="NCBIfam" id="NF003544">
    <property type="entry name" value="PRK05201.1"/>
    <property type="match status" value="1"/>
</dbReference>
<dbReference type="PANTHER" id="PTHR48102">
    <property type="entry name" value="ATP-DEPENDENT CLP PROTEASE ATP-BINDING SUBUNIT CLPX-LIKE, MITOCHONDRIAL-RELATED"/>
    <property type="match status" value="1"/>
</dbReference>
<dbReference type="PANTHER" id="PTHR48102:SF3">
    <property type="entry name" value="ATP-DEPENDENT PROTEASE ATPASE SUBUNIT HSLU"/>
    <property type="match status" value="1"/>
</dbReference>
<dbReference type="Pfam" id="PF00004">
    <property type="entry name" value="AAA"/>
    <property type="match status" value="1"/>
</dbReference>
<dbReference type="Pfam" id="PF07724">
    <property type="entry name" value="AAA_2"/>
    <property type="match status" value="1"/>
</dbReference>
<dbReference type="Pfam" id="PF10431">
    <property type="entry name" value="ClpB_D2-small"/>
    <property type="match status" value="1"/>
</dbReference>
<dbReference type="SMART" id="SM00382">
    <property type="entry name" value="AAA"/>
    <property type="match status" value="1"/>
</dbReference>
<dbReference type="SMART" id="SM01086">
    <property type="entry name" value="ClpB_D2-small"/>
    <property type="match status" value="1"/>
</dbReference>
<dbReference type="SUPFAM" id="SSF52540">
    <property type="entry name" value="P-loop containing nucleoside triphosphate hydrolases"/>
    <property type="match status" value="1"/>
</dbReference>
<protein>
    <recommendedName>
        <fullName evidence="1">ATP-dependent protease ATPase subunit HslU</fullName>
    </recommendedName>
    <alternativeName>
        <fullName evidence="1">Unfoldase HslU</fullName>
    </alternativeName>
</protein>